<comment type="function">
    <text evidence="3">Involved in defense against fungal pathogens. Possesses antifungal activity against diverse pathogenic fungi.</text>
</comment>
<comment type="subunit">
    <text evidence="1">Homodimer.</text>
</comment>
<comment type="subcellular location">
    <subcellularLocation>
        <location evidence="3">Cytoplasm</location>
        <location evidence="3">Cytosol</location>
    </subcellularLocation>
</comment>
<comment type="induction">
    <text evidence="3">Induced by salicylic acid (SA), jasmonic acid (JA) and infection with the fungal pathogen F.oxysporum.</text>
</comment>
<dbReference type="EMBL" id="AC006085">
    <property type="protein sequence ID" value="AAD30647.1"/>
    <property type="molecule type" value="Genomic_DNA"/>
</dbReference>
<dbReference type="EMBL" id="CP002684">
    <property type="protein sequence ID" value="AEE32656.1"/>
    <property type="molecule type" value="Genomic_DNA"/>
</dbReference>
<dbReference type="EMBL" id="BT010487">
    <property type="protein sequence ID" value="AAQ65110.1"/>
    <property type="molecule type" value="mRNA"/>
</dbReference>
<dbReference type="EMBL" id="AK175329">
    <property type="protein sequence ID" value="BAD43092.1"/>
    <property type="molecule type" value="mRNA"/>
</dbReference>
<dbReference type="EMBL" id="AK176865">
    <property type="protein sequence ID" value="BAD44628.1"/>
    <property type="molecule type" value="mRNA"/>
</dbReference>
<dbReference type="PIR" id="F96551">
    <property type="entry name" value="F96551"/>
</dbReference>
<dbReference type="RefSeq" id="NP_175547.1">
    <property type="nucleotide sequence ID" value="NM_104014.4"/>
</dbReference>
<dbReference type="SMR" id="Q9SYD8"/>
<dbReference type="FunCoup" id="Q9SYD8">
    <property type="interactions" value="40"/>
</dbReference>
<dbReference type="STRING" id="3702.Q9SYD8"/>
<dbReference type="PaxDb" id="3702-AT1G51360.1"/>
<dbReference type="ProteomicsDB" id="222601"/>
<dbReference type="DNASU" id="841560"/>
<dbReference type="EnsemblPlants" id="AT1G51360.1">
    <property type="protein sequence ID" value="AT1G51360.1"/>
    <property type="gene ID" value="AT1G51360"/>
</dbReference>
<dbReference type="GeneID" id="841560"/>
<dbReference type="Gramene" id="AT1G51360.1">
    <property type="protein sequence ID" value="AT1G51360.1"/>
    <property type="gene ID" value="AT1G51360"/>
</dbReference>
<dbReference type="KEGG" id="ath:AT1G51360"/>
<dbReference type="Araport" id="AT1G51360"/>
<dbReference type="TAIR" id="AT1G51360">
    <property type="gene designation" value="DABB1"/>
</dbReference>
<dbReference type="eggNOG" id="ENOG502QTKV">
    <property type="taxonomic scope" value="Eukaryota"/>
</dbReference>
<dbReference type="HOGENOM" id="CLU_087754_0_0_1"/>
<dbReference type="InParanoid" id="Q9SYD8"/>
<dbReference type="OMA" id="KHPKRPF"/>
<dbReference type="PhylomeDB" id="Q9SYD8"/>
<dbReference type="PRO" id="PR:Q9SYD8"/>
<dbReference type="Proteomes" id="UP000006548">
    <property type="component" value="Chromosome 1"/>
</dbReference>
<dbReference type="ExpressionAtlas" id="Q9SYD8">
    <property type="expression patterns" value="baseline and differential"/>
</dbReference>
<dbReference type="GO" id="GO:0005829">
    <property type="term" value="C:cytosol"/>
    <property type="evidence" value="ECO:0000314"/>
    <property type="project" value="TAIR"/>
</dbReference>
<dbReference type="GO" id="GO:0050832">
    <property type="term" value="P:defense response to fungus"/>
    <property type="evidence" value="ECO:0000314"/>
    <property type="project" value="TAIR"/>
</dbReference>
<dbReference type="GO" id="GO:0009620">
    <property type="term" value="P:response to fungus"/>
    <property type="evidence" value="ECO:0000270"/>
    <property type="project" value="TAIR"/>
</dbReference>
<dbReference type="GO" id="GO:0009753">
    <property type="term" value="P:response to jasmonic acid"/>
    <property type="evidence" value="ECO:0000270"/>
    <property type="project" value="TAIR"/>
</dbReference>
<dbReference type="FunFam" id="3.30.70.100:FF:000112">
    <property type="entry name" value="Stress-response A/B barrel domain-containing protein DABB1"/>
    <property type="match status" value="1"/>
</dbReference>
<dbReference type="Gene3D" id="3.30.70.100">
    <property type="match status" value="2"/>
</dbReference>
<dbReference type="InterPro" id="IPR013097">
    <property type="entry name" value="Dabb"/>
</dbReference>
<dbReference type="InterPro" id="IPR011008">
    <property type="entry name" value="Dimeric_a/b-barrel"/>
</dbReference>
<dbReference type="InterPro" id="IPR044662">
    <property type="entry name" value="HS1/DABB1-like"/>
</dbReference>
<dbReference type="PANTHER" id="PTHR33178">
    <property type="match status" value="1"/>
</dbReference>
<dbReference type="PANTHER" id="PTHR33178:SF12">
    <property type="entry name" value="STRESS-RESPONSE A_B BARREL DOMAIN-CONTAINING PROTEIN DABB1"/>
    <property type="match status" value="1"/>
</dbReference>
<dbReference type="Pfam" id="PF07876">
    <property type="entry name" value="Dabb"/>
    <property type="match status" value="2"/>
</dbReference>
<dbReference type="SMART" id="SM00886">
    <property type="entry name" value="Dabb"/>
    <property type="match status" value="2"/>
</dbReference>
<dbReference type="SUPFAM" id="SSF54909">
    <property type="entry name" value="Dimeric alpha+beta barrel"/>
    <property type="match status" value="2"/>
</dbReference>
<dbReference type="PROSITE" id="PS51502">
    <property type="entry name" value="S_R_A_B_BARREL"/>
    <property type="match status" value="2"/>
</dbReference>
<sequence length="210" mass="23652">MSSIVEHVVLFKLNDDDVDSGKINSMVNGINELVNLDQVLHLYCGSIHRLITTTASDFTHVLHSRYRSKEDLNAYAIHPDHVRVVKESESIREDIMAVDWIAEQAPEALAPPLGSIGKITLLKLKENVMEEAKLEIMEVMKEKFEGIDQITVGENFSPGRSKDFSIGSISYFRDLGEIEAVDDQMKLQNDKIRDYVDDTIVVEFNVPSSS</sequence>
<gene>
    <name evidence="4" type="primary">DABB1</name>
    <name evidence="6" type="ordered locus">At1g51360</name>
    <name evidence="7" type="ORF">F11M15.22</name>
</gene>
<keyword id="KW-0963">Cytoplasm</keyword>
<keyword id="KW-0611">Plant defense</keyword>
<keyword id="KW-1185">Reference proteome</keyword>
<feature type="chain" id="PRO_0000436069" description="Stress-response A/B barrel domain-containing protein DABB1">
    <location>
        <begin position="1"/>
        <end position="210"/>
    </location>
</feature>
<feature type="domain" description="Stress-response A/B barrel 1" evidence="2">
    <location>
        <begin position="5"/>
        <end position="100"/>
    </location>
</feature>
<feature type="domain" description="Stress-response A/B barrel 2" evidence="2">
    <location>
        <begin position="116"/>
        <end position="204"/>
    </location>
</feature>
<reference key="1">
    <citation type="journal article" date="2000" name="Nature">
        <title>Sequence and analysis of chromosome 1 of the plant Arabidopsis thaliana.</title>
        <authorList>
            <person name="Theologis A."/>
            <person name="Ecker J.R."/>
            <person name="Palm C.J."/>
            <person name="Federspiel N.A."/>
            <person name="Kaul S."/>
            <person name="White O."/>
            <person name="Alonso J."/>
            <person name="Altafi H."/>
            <person name="Araujo R."/>
            <person name="Bowman C.L."/>
            <person name="Brooks S.Y."/>
            <person name="Buehler E."/>
            <person name="Chan A."/>
            <person name="Chao Q."/>
            <person name="Chen H."/>
            <person name="Cheuk R.F."/>
            <person name="Chin C.W."/>
            <person name="Chung M.K."/>
            <person name="Conn L."/>
            <person name="Conway A.B."/>
            <person name="Conway A.R."/>
            <person name="Creasy T.H."/>
            <person name="Dewar K."/>
            <person name="Dunn P."/>
            <person name="Etgu P."/>
            <person name="Feldblyum T.V."/>
            <person name="Feng J.-D."/>
            <person name="Fong B."/>
            <person name="Fujii C.Y."/>
            <person name="Gill J.E."/>
            <person name="Goldsmith A.D."/>
            <person name="Haas B."/>
            <person name="Hansen N.F."/>
            <person name="Hughes B."/>
            <person name="Huizar L."/>
            <person name="Hunter J.L."/>
            <person name="Jenkins J."/>
            <person name="Johnson-Hopson C."/>
            <person name="Khan S."/>
            <person name="Khaykin E."/>
            <person name="Kim C.J."/>
            <person name="Koo H.L."/>
            <person name="Kremenetskaia I."/>
            <person name="Kurtz D.B."/>
            <person name="Kwan A."/>
            <person name="Lam B."/>
            <person name="Langin-Hooper S."/>
            <person name="Lee A."/>
            <person name="Lee J.M."/>
            <person name="Lenz C.A."/>
            <person name="Li J.H."/>
            <person name="Li Y.-P."/>
            <person name="Lin X."/>
            <person name="Liu S.X."/>
            <person name="Liu Z.A."/>
            <person name="Luros J.S."/>
            <person name="Maiti R."/>
            <person name="Marziali A."/>
            <person name="Militscher J."/>
            <person name="Miranda M."/>
            <person name="Nguyen M."/>
            <person name="Nierman W.C."/>
            <person name="Osborne B.I."/>
            <person name="Pai G."/>
            <person name="Peterson J."/>
            <person name="Pham P.K."/>
            <person name="Rizzo M."/>
            <person name="Rooney T."/>
            <person name="Rowley D."/>
            <person name="Sakano H."/>
            <person name="Salzberg S.L."/>
            <person name="Schwartz J.R."/>
            <person name="Shinn P."/>
            <person name="Southwick A.M."/>
            <person name="Sun H."/>
            <person name="Tallon L.J."/>
            <person name="Tambunga G."/>
            <person name="Toriumi M.J."/>
            <person name="Town C.D."/>
            <person name="Utterback T."/>
            <person name="Van Aken S."/>
            <person name="Vaysberg M."/>
            <person name="Vysotskaia V.S."/>
            <person name="Walker M."/>
            <person name="Wu D."/>
            <person name="Yu G."/>
            <person name="Fraser C.M."/>
            <person name="Venter J.C."/>
            <person name="Davis R.W."/>
        </authorList>
    </citation>
    <scope>NUCLEOTIDE SEQUENCE [LARGE SCALE GENOMIC DNA]</scope>
    <source>
        <strain>cv. Columbia</strain>
    </source>
</reference>
<reference key="2">
    <citation type="journal article" date="2017" name="Plant J.">
        <title>Araport11: a complete reannotation of the Arabidopsis thaliana reference genome.</title>
        <authorList>
            <person name="Cheng C.Y."/>
            <person name="Krishnakumar V."/>
            <person name="Chan A.P."/>
            <person name="Thibaud-Nissen F."/>
            <person name="Schobel S."/>
            <person name="Town C.D."/>
        </authorList>
    </citation>
    <scope>GENOME REANNOTATION</scope>
    <source>
        <strain>cv. Columbia</strain>
    </source>
</reference>
<reference key="3">
    <citation type="journal article" date="2003" name="Science">
        <title>Empirical analysis of transcriptional activity in the Arabidopsis genome.</title>
        <authorList>
            <person name="Yamada K."/>
            <person name="Lim J."/>
            <person name="Dale J.M."/>
            <person name="Chen H."/>
            <person name="Shinn P."/>
            <person name="Palm C.J."/>
            <person name="Southwick A.M."/>
            <person name="Wu H.C."/>
            <person name="Kim C.J."/>
            <person name="Nguyen M."/>
            <person name="Pham P.K."/>
            <person name="Cheuk R.F."/>
            <person name="Karlin-Newmann G."/>
            <person name="Liu S.X."/>
            <person name="Lam B."/>
            <person name="Sakano H."/>
            <person name="Wu T."/>
            <person name="Yu G."/>
            <person name="Miranda M."/>
            <person name="Quach H.L."/>
            <person name="Tripp M."/>
            <person name="Chang C.H."/>
            <person name="Lee J.M."/>
            <person name="Toriumi M.J."/>
            <person name="Chan M.M."/>
            <person name="Tang C.C."/>
            <person name="Onodera C.S."/>
            <person name="Deng J.M."/>
            <person name="Akiyama K."/>
            <person name="Ansari Y."/>
            <person name="Arakawa T."/>
            <person name="Banh J."/>
            <person name="Banno F."/>
            <person name="Bowser L."/>
            <person name="Brooks S.Y."/>
            <person name="Carninci P."/>
            <person name="Chao Q."/>
            <person name="Choy N."/>
            <person name="Enju A."/>
            <person name="Goldsmith A.D."/>
            <person name="Gurjal M."/>
            <person name="Hansen N.F."/>
            <person name="Hayashizaki Y."/>
            <person name="Johnson-Hopson C."/>
            <person name="Hsuan V.W."/>
            <person name="Iida K."/>
            <person name="Karnes M."/>
            <person name="Khan S."/>
            <person name="Koesema E."/>
            <person name="Ishida J."/>
            <person name="Jiang P.X."/>
            <person name="Jones T."/>
            <person name="Kawai J."/>
            <person name="Kamiya A."/>
            <person name="Meyers C."/>
            <person name="Nakajima M."/>
            <person name="Narusaka M."/>
            <person name="Seki M."/>
            <person name="Sakurai T."/>
            <person name="Satou M."/>
            <person name="Tamse R."/>
            <person name="Vaysberg M."/>
            <person name="Wallender E.K."/>
            <person name="Wong C."/>
            <person name="Yamamura Y."/>
            <person name="Yuan S."/>
            <person name="Shinozaki K."/>
            <person name="Davis R.W."/>
            <person name="Theologis A."/>
            <person name="Ecker J.R."/>
        </authorList>
    </citation>
    <scope>NUCLEOTIDE SEQUENCE [LARGE SCALE MRNA]</scope>
    <source>
        <strain>cv. Columbia</strain>
    </source>
</reference>
<reference key="4">
    <citation type="submission" date="2004-09" db="EMBL/GenBank/DDBJ databases">
        <title>Large-scale analysis of RIKEN Arabidopsis full-length (RAFL) cDNAs.</title>
        <authorList>
            <person name="Totoki Y."/>
            <person name="Seki M."/>
            <person name="Ishida J."/>
            <person name="Nakajima M."/>
            <person name="Enju A."/>
            <person name="Kamiya A."/>
            <person name="Narusaka M."/>
            <person name="Shin-i T."/>
            <person name="Nakagawa M."/>
            <person name="Sakamoto N."/>
            <person name="Oishi K."/>
            <person name="Kohara Y."/>
            <person name="Kobayashi M."/>
            <person name="Toyoda A."/>
            <person name="Sakaki Y."/>
            <person name="Sakurai T."/>
            <person name="Iida K."/>
            <person name="Akiyama K."/>
            <person name="Satou M."/>
            <person name="Toyoda T."/>
            <person name="Konagaya A."/>
            <person name="Carninci P."/>
            <person name="Kawai J."/>
            <person name="Hayashizaki Y."/>
            <person name="Shinozaki K."/>
        </authorList>
    </citation>
    <scope>NUCLEOTIDE SEQUENCE [LARGE SCALE MRNA]</scope>
    <source>
        <strain>cv. Columbia</strain>
    </source>
</reference>
<reference key="5">
    <citation type="journal article" date="2008" name="Biochim. Biophys. Acta">
        <title>Functional characterization of pathogen-responsive protein AtDabb1 with an antifungal activity from Arabidopsis thaliana.</title>
        <authorList>
            <person name="Lee J.R."/>
            <person name="Lee S.S."/>
            <person name="Park S.C."/>
            <person name="Kang J.S."/>
            <person name="Kim S.Y."/>
            <person name="Lee K.O."/>
            <person name="Lee S.Y."/>
        </authorList>
    </citation>
    <scope>IDENTIFICATION BY MASS SPECTROMETRY</scope>
    <scope>FUNCTION</scope>
    <scope>SUBCELLULAR LOCATION</scope>
    <scope>INDUCTION</scope>
</reference>
<organism>
    <name type="scientific">Arabidopsis thaliana</name>
    <name type="common">Mouse-ear cress</name>
    <dbReference type="NCBI Taxonomy" id="3702"/>
    <lineage>
        <taxon>Eukaryota</taxon>
        <taxon>Viridiplantae</taxon>
        <taxon>Streptophyta</taxon>
        <taxon>Embryophyta</taxon>
        <taxon>Tracheophyta</taxon>
        <taxon>Spermatophyta</taxon>
        <taxon>Magnoliopsida</taxon>
        <taxon>eudicotyledons</taxon>
        <taxon>Gunneridae</taxon>
        <taxon>Pentapetalae</taxon>
        <taxon>rosids</taxon>
        <taxon>malvids</taxon>
        <taxon>Brassicales</taxon>
        <taxon>Brassicaceae</taxon>
        <taxon>Camelineae</taxon>
        <taxon>Arabidopsis</taxon>
    </lineage>
</organism>
<evidence type="ECO:0000250" key="1">
    <source>
        <dbReference type="UniProtKB" id="Q9LUV2"/>
    </source>
</evidence>
<evidence type="ECO:0000255" key="2">
    <source>
        <dbReference type="PROSITE-ProRule" id="PRU00835"/>
    </source>
</evidence>
<evidence type="ECO:0000269" key="3">
    <source>
    </source>
</evidence>
<evidence type="ECO:0000303" key="4">
    <source>
    </source>
</evidence>
<evidence type="ECO:0000305" key="5"/>
<evidence type="ECO:0000312" key="6">
    <source>
        <dbReference type="Araport" id="AT1G51360"/>
    </source>
</evidence>
<evidence type="ECO:0000312" key="7">
    <source>
        <dbReference type="EMBL" id="AAD30647.1"/>
    </source>
</evidence>
<proteinExistence type="evidence at protein level"/>
<accession>Q9SYD8</accession>
<protein>
    <recommendedName>
        <fullName evidence="5">Stress-response A/B barrel domain-containing protein DABB1</fullName>
    </recommendedName>
    <alternativeName>
        <fullName evidence="4">Dimeric A/B barrel domain-containing protein 1</fullName>
        <shortName evidence="4">AtDabb1</shortName>
    </alternativeName>
</protein>
<name>DABB1_ARATH</name>